<proteinExistence type="evidence at protein level"/>
<comment type="function">
    <text>Thionins are small plant proteins which are toxic to animal cells. They seem to exert their toxic effect at the level of the cell membrane. Their precise function is not known.</text>
</comment>
<comment type="subcellular location">
    <subcellularLocation>
        <location evidence="3">Secreted</location>
    </subcellularLocation>
</comment>
<comment type="similarity">
    <text evidence="4">Belongs to the plant thionin (TC 1.C.44) family.</text>
</comment>
<gene>
    <name type="primary">THI2.3</name>
</gene>
<evidence type="ECO:0000269" key="1">
    <source>
    </source>
</evidence>
<evidence type="ECO:0000269" key="2">
    <source>
    </source>
</evidence>
<evidence type="ECO:0000269" key="3">
    <source>
    </source>
</evidence>
<evidence type="ECO:0000305" key="4"/>
<evidence type="ECO:0007744" key="5">
    <source>
        <dbReference type="PDB" id="1JMN"/>
    </source>
</evidence>
<evidence type="ECO:0007829" key="6">
    <source>
        <dbReference type="PDB" id="1JMN"/>
    </source>
</evidence>
<feature type="chain" id="PRO_0000221483" description="Viscotoxin-A2" evidence="3">
    <location>
        <begin position="1"/>
        <end position="46"/>
    </location>
</feature>
<feature type="disulfide bond" evidence="1 5">
    <location>
        <begin position="3"/>
        <end position="40"/>
    </location>
</feature>
<feature type="disulfide bond" evidence="1 5">
    <location>
        <begin position="4"/>
        <end position="32"/>
    </location>
</feature>
<feature type="disulfide bond" evidence="1 2 5">
    <location>
        <begin position="16"/>
        <end position="26"/>
    </location>
</feature>
<feature type="helix" evidence="6">
    <location>
        <begin position="7"/>
        <end position="17"/>
    </location>
</feature>
<feature type="turn" evidence="6">
    <location>
        <begin position="18"/>
        <end position="20"/>
    </location>
</feature>
<feature type="helix" evidence="6">
    <location>
        <begin position="24"/>
        <end position="30"/>
    </location>
</feature>
<feature type="strand" evidence="6">
    <location>
        <begin position="36"/>
        <end position="38"/>
    </location>
</feature>
<name>THN2_VISAL</name>
<sequence length="46" mass="4834">KSCCPNTTGRNIYNTCRFGGGSREVCASLSGCKIISASTCPSYPDK</sequence>
<reference key="1">
    <citation type="journal article" date="1972" name="Acta Chem. Scand.">
        <title>The amino acid sequence of viscotoxin A2 from the European mistletoe (Viscum album L., Loranthaceae).</title>
        <authorList>
            <person name="Olson T."/>
            <person name="Samuelsson G."/>
        </authorList>
    </citation>
    <scope>PROTEIN SEQUENCE</scope>
    <scope>SUBCELLULAR LOCATION</scope>
</reference>
<reference key="2">
    <citation type="journal article" date="1974" name="Acta Pharm. Suec.">
        <title>The disulphide bonds of viscotoxin A2 from the European mistletoe (Viscum album L. Loranthaceae).</title>
        <authorList>
            <person name="Olson T."/>
            <person name="Samuelsson G."/>
        </authorList>
    </citation>
    <scope>DISULFIDE BONDS</scope>
</reference>
<reference key="3">
    <citation type="journal article" date="2003" name="Biochem. J.">
        <title>Comparative membrane interaction study of viscotoxins A3, A2 and B from mistletoe (Viscum album) and connections with their structures.</title>
        <authorList>
            <person name="Coulon A."/>
            <person name="Mosbah A."/>
            <person name="Lopez A."/>
            <person name="Sautereau A.-M."/>
            <person name="Schaller G."/>
            <person name="Urech K."/>
            <person name="Rouge P."/>
            <person name="Darbon H."/>
        </authorList>
    </citation>
    <scope>STRUCTURE BY NMR OF 1-42</scope>
    <scope>DISULFIDE BONDS</scope>
</reference>
<dbReference type="PIR" id="A90005">
    <property type="entry name" value="VTVAA2"/>
</dbReference>
<dbReference type="PDB" id="1JMN">
    <property type="method" value="NMR"/>
    <property type="chains" value="A=1-44"/>
</dbReference>
<dbReference type="PDBsum" id="1JMN"/>
<dbReference type="SMR" id="P32880"/>
<dbReference type="EvolutionaryTrace" id="P32880"/>
<dbReference type="GO" id="GO:0005576">
    <property type="term" value="C:extracellular region"/>
    <property type="evidence" value="ECO:0007669"/>
    <property type="project" value="UniProtKB-SubCell"/>
</dbReference>
<dbReference type="GO" id="GO:0090729">
    <property type="term" value="F:toxin activity"/>
    <property type="evidence" value="ECO:0007669"/>
    <property type="project" value="UniProtKB-KW"/>
</dbReference>
<dbReference type="GO" id="GO:0006952">
    <property type="term" value="P:defense response"/>
    <property type="evidence" value="ECO:0007669"/>
    <property type="project" value="UniProtKB-KW"/>
</dbReference>
<dbReference type="FunFam" id="3.30.1350.10:FF:000001">
    <property type="entry name" value="Hellethionin-D"/>
    <property type="match status" value="1"/>
</dbReference>
<dbReference type="Gene3D" id="3.30.1350.10">
    <property type="entry name" value="Thionin-like"/>
    <property type="match status" value="1"/>
</dbReference>
<dbReference type="InterPro" id="IPR001010">
    <property type="entry name" value="Thionin"/>
</dbReference>
<dbReference type="InterPro" id="IPR036391">
    <property type="entry name" value="Thionin-like_sf"/>
</dbReference>
<dbReference type="PANTHER" id="PTHR33920">
    <property type="entry name" value="THIONIN-2.1-RELATED"/>
    <property type="match status" value="1"/>
</dbReference>
<dbReference type="PANTHER" id="PTHR33920:SF2">
    <property type="entry name" value="THIONIN-2.1-RELATED"/>
    <property type="match status" value="1"/>
</dbReference>
<dbReference type="Pfam" id="PF00321">
    <property type="entry name" value="Thionin"/>
    <property type="match status" value="1"/>
</dbReference>
<dbReference type="PRINTS" id="PR00287">
    <property type="entry name" value="THIONIN"/>
</dbReference>
<dbReference type="SUPFAM" id="SSF57429">
    <property type="entry name" value="Crambin-like"/>
    <property type="match status" value="1"/>
</dbReference>
<dbReference type="PROSITE" id="PS00271">
    <property type="entry name" value="THIONIN"/>
    <property type="match status" value="1"/>
</dbReference>
<accession>P32880</accession>
<accession>P01536</accession>
<organism>
    <name type="scientific">Viscum album</name>
    <name type="common">European mistletoe</name>
    <dbReference type="NCBI Taxonomy" id="3972"/>
    <lineage>
        <taxon>Eukaryota</taxon>
        <taxon>Viridiplantae</taxon>
        <taxon>Streptophyta</taxon>
        <taxon>Embryophyta</taxon>
        <taxon>Tracheophyta</taxon>
        <taxon>Spermatophyta</taxon>
        <taxon>Magnoliopsida</taxon>
        <taxon>eudicotyledons</taxon>
        <taxon>Gunneridae</taxon>
        <taxon>Pentapetalae</taxon>
        <taxon>Santalales</taxon>
        <taxon>Viscaceae</taxon>
        <taxon>Viscum</taxon>
    </lineage>
</organism>
<protein>
    <recommendedName>
        <fullName>Viscotoxin-A2</fullName>
    </recommendedName>
</protein>
<keyword id="KW-0002">3D-structure</keyword>
<keyword id="KW-0903">Direct protein sequencing</keyword>
<keyword id="KW-1015">Disulfide bond</keyword>
<keyword id="KW-0611">Plant defense</keyword>
<keyword id="KW-0964">Secreted</keyword>
<keyword id="KW-0800">Toxin</keyword>